<sequence length="175" mass="18702">MALNVFQKQEVVKELAGVATKAYSLIVAEYAGITVSQMTAMRKQARESGVYLKVVKNKLAARALGDTEYAVIKEKLIGPLLYAFSLEDPGAAGRLIKEFSKKHDKLKSKAVSLGGVLYPAGHVDVLASLPTRLQALAMLARVLSEPVTLFARAIKAVADDKSETVAVSAPETSEA</sequence>
<feature type="chain" id="PRO_1000121036" description="Large ribosomal subunit protein uL10">
    <location>
        <begin position="1"/>
        <end position="175"/>
    </location>
</feature>
<gene>
    <name evidence="1" type="primary">rplJ</name>
    <name type="ordered locus">Xfasm12_2198</name>
</gene>
<reference key="1">
    <citation type="journal article" date="2010" name="J. Bacteriol.">
        <title>Whole genome sequences of two Xylella fastidiosa strains (M12 and M23) causing almond leaf scorch disease in California.</title>
        <authorList>
            <person name="Chen J."/>
            <person name="Xie G."/>
            <person name="Han S."/>
            <person name="Chertkov O."/>
            <person name="Sims D."/>
            <person name="Civerolo E.L."/>
        </authorList>
    </citation>
    <scope>NUCLEOTIDE SEQUENCE [LARGE SCALE GENOMIC DNA]</scope>
    <source>
        <strain>M12</strain>
    </source>
</reference>
<protein>
    <recommendedName>
        <fullName evidence="1">Large ribosomal subunit protein uL10</fullName>
    </recommendedName>
    <alternativeName>
        <fullName evidence="2">50S ribosomal protein L10</fullName>
    </alternativeName>
</protein>
<dbReference type="EMBL" id="CP000941">
    <property type="protein sequence ID" value="ACA13051.1"/>
    <property type="molecule type" value="Genomic_DNA"/>
</dbReference>
<dbReference type="RefSeq" id="WP_004084691.1">
    <property type="nucleotide sequence ID" value="NC_010513.1"/>
</dbReference>
<dbReference type="SMR" id="B0U5X9"/>
<dbReference type="KEGG" id="xfm:Xfasm12_2198"/>
<dbReference type="HOGENOM" id="CLU_092227_0_1_6"/>
<dbReference type="GO" id="GO:0015934">
    <property type="term" value="C:large ribosomal subunit"/>
    <property type="evidence" value="ECO:0007669"/>
    <property type="project" value="InterPro"/>
</dbReference>
<dbReference type="GO" id="GO:0070180">
    <property type="term" value="F:large ribosomal subunit rRNA binding"/>
    <property type="evidence" value="ECO:0007669"/>
    <property type="project" value="UniProtKB-UniRule"/>
</dbReference>
<dbReference type="GO" id="GO:0003735">
    <property type="term" value="F:structural constituent of ribosome"/>
    <property type="evidence" value="ECO:0007669"/>
    <property type="project" value="InterPro"/>
</dbReference>
<dbReference type="GO" id="GO:0006412">
    <property type="term" value="P:translation"/>
    <property type="evidence" value="ECO:0007669"/>
    <property type="project" value="UniProtKB-UniRule"/>
</dbReference>
<dbReference type="CDD" id="cd05797">
    <property type="entry name" value="Ribosomal_L10"/>
    <property type="match status" value="1"/>
</dbReference>
<dbReference type="Gene3D" id="3.30.70.1730">
    <property type="match status" value="1"/>
</dbReference>
<dbReference type="HAMAP" id="MF_00362">
    <property type="entry name" value="Ribosomal_uL10"/>
    <property type="match status" value="1"/>
</dbReference>
<dbReference type="InterPro" id="IPR001790">
    <property type="entry name" value="Ribosomal_uL10"/>
</dbReference>
<dbReference type="InterPro" id="IPR043141">
    <property type="entry name" value="Ribosomal_uL10-like_sf"/>
</dbReference>
<dbReference type="InterPro" id="IPR022973">
    <property type="entry name" value="Ribosomal_uL10_bac"/>
</dbReference>
<dbReference type="InterPro" id="IPR047865">
    <property type="entry name" value="Ribosomal_uL10_bac_type"/>
</dbReference>
<dbReference type="InterPro" id="IPR002363">
    <property type="entry name" value="Ribosomal_uL10_CS_bac"/>
</dbReference>
<dbReference type="NCBIfam" id="NF000955">
    <property type="entry name" value="PRK00099.1-1"/>
    <property type="match status" value="1"/>
</dbReference>
<dbReference type="PANTHER" id="PTHR11560">
    <property type="entry name" value="39S RIBOSOMAL PROTEIN L10, MITOCHONDRIAL"/>
    <property type="match status" value="1"/>
</dbReference>
<dbReference type="Pfam" id="PF00466">
    <property type="entry name" value="Ribosomal_L10"/>
    <property type="match status" value="1"/>
</dbReference>
<dbReference type="SUPFAM" id="SSF160369">
    <property type="entry name" value="Ribosomal protein L10-like"/>
    <property type="match status" value="1"/>
</dbReference>
<dbReference type="PROSITE" id="PS01109">
    <property type="entry name" value="RIBOSOMAL_L10"/>
    <property type="match status" value="1"/>
</dbReference>
<comment type="function">
    <text evidence="1">Forms part of the ribosomal stalk, playing a central role in the interaction of the ribosome with GTP-bound translation factors.</text>
</comment>
<comment type="subunit">
    <text evidence="1">Part of the ribosomal stalk of the 50S ribosomal subunit. The N-terminus interacts with L11 and the large rRNA to form the base of the stalk. The C-terminus forms an elongated spine to which L12 dimers bind in a sequential fashion forming a multimeric L10(L12)X complex.</text>
</comment>
<comment type="similarity">
    <text evidence="1">Belongs to the universal ribosomal protein uL10 family.</text>
</comment>
<accession>B0U5X9</accession>
<keyword id="KW-0687">Ribonucleoprotein</keyword>
<keyword id="KW-0689">Ribosomal protein</keyword>
<keyword id="KW-0694">RNA-binding</keyword>
<keyword id="KW-0699">rRNA-binding</keyword>
<proteinExistence type="inferred from homology"/>
<organism>
    <name type="scientific">Xylella fastidiosa (strain M12)</name>
    <dbReference type="NCBI Taxonomy" id="405440"/>
    <lineage>
        <taxon>Bacteria</taxon>
        <taxon>Pseudomonadati</taxon>
        <taxon>Pseudomonadota</taxon>
        <taxon>Gammaproteobacteria</taxon>
        <taxon>Lysobacterales</taxon>
        <taxon>Lysobacteraceae</taxon>
        <taxon>Xylella</taxon>
    </lineage>
</organism>
<evidence type="ECO:0000255" key="1">
    <source>
        <dbReference type="HAMAP-Rule" id="MF_00362"/>
    </source>
</evidence>
<evidence type="ECO:0000305" key="2"/>
<name>RL10_XYLFM</name>